<sequence length="518" mass="61006">MTAYKPYRHQLRRSLFASTIFPVFLVIIIGLVSFYAIYIWIEHRTIHQHVDESQSSLHHTEKQIQTFITQHNNSFQELDLTNHHDVTATKRELLKLIHQQPATLYYELSGPNQFITNNYEHLNTKNMYLFSTHQLKFNNSTYMLKIYMANTPRLSEIKKDSRQFALIVDQYDNILYANDDRFTIGEKYRPQQFGFMNESVKLNHADHRLIIYKDIHENIEDGITLLIVMAVVLVLLVIFGFISADNMAKRQTKDIETIIQKIYYAKNRHLGTYTPLKNNSELEEINNYIYDLFESNEQLIHSIEHTERRLRDIQLKEIERQFQPHFLFNTMQTIQYLITLSPKLAQTVVQQLSQMLRYSLRTNSHTVELNEELNYIEQYVAIQNIRFDDMIKLHIESSEEARHQTIGKMMLQPLIENAIKHGRDTESLDITIRLTLARQNLHVLVCDNGIGMSSSRLQYVRQSLNNDVFDTKHLGLNHLHNKAMIQYGSHARLHIFSKRNQGTLICYKIPLSRGNVDV</sequence>
<name>HPTS_STAAN</name>
<comment type="function">
    <text evidence="2">Member of the two-component regulatory system HptS/HptR that regulates genes involved in hexose phosphate transport system in response to changes in extracellular phosphate sources. May act as a sensor protein kinase which is autophosphorylated at a histidine residue and transfers its phosphate group to the conserved aspartic acid residue in the regulatory domain of HptS. In turn, HptS antagonizes CcpA-dependent transcription of a subset of CcpA-regulated genes involved in antibiotic susceptibility.</text>
</comment>
<comment type="catalytic activity">
    <reaction>
        <text>ATP + protein L-histidine = ADP + protein N-phospho-L-histidine.</text>
        <dbReference type="EC" id="2.7.13.3"/>
    </reaction>
</comment>
<comment type="subcellular location">
    <subcellularLocation>
        <location evidence="4">Cell membrane</location>
        <topology evidence="4">Multi-pass membrane protein</topology>
    </subcellularLocation>
</comment>
<comment type="PTM">
    <text evidence="1">Autophosphorylated.</text>
</comment>
<accession>Q7A7X8</accession>
<gene>
    <name type="primary">hptS</name>
    <name type="ordered locus">SA0216</name>
</gene>
<reference key="1">
    <citation type="journal article" date="2001" name="Lancet">
        <title>Whole genome sequencing of meticillin-resistant Staphylococcus aureus.</title>
        <authorList>
            <person name="Kuroda M."/>
            <person name="Ohta T."/>
            <person name="Uchiyama I."/>
            <person name="Baba T."/>
            <person name="Yuzawa H."/>
            <person name="Kobayashi I."/>
            <person name="Cui L."/>
            <person name="Oguchi A."/>
            <person name="Aoki K."/>
            <person name="Nagai Y."/>
            <person name="Lian J.-Q."/>
            <person name="Ito T."/>
            <person name="Kanamori M."/>
            <person name="Matsumaru H."/>
            <person name="Maruyama A."/>
            <person name="Murakami H."/>
            <person name="Hosoyama A."/>
            <person name="Mizutani-Ui Y."/>
            <person name="Takahashi N.K."/>
            <person name="Sawano T."/>
            <person name="Inoue R."/>
            <person name="Kaito C."/>
            <person name="Sekimizu K."/>
            <person name="Hirakawa H."/>
            <person name="Kuhara S."/>
            <person name="Goto S."/>
            <person name="Yabuzaki J."/>
            <person name="Kanehisa M."/>
            <person name="Yamashita A."/>
            <person name="Oshima K."/>
            <person name="Furuya K."/>
            <person name="Yoshino C."/>
            <person name="Shiba T."/>
            <person name="Hattori M."/>
            <person name="Ogasawara N."/>
            <person name="Hayashi H."/>
            <person name="Hiramatsu K."/>
        </authorList>
    </citation>
    <scope>NUCLEOTIDE SEQUENCE [LARGE SCALE GENOMIC DNA]</scope>
    <source>
        <strain>N315</strain>
    </source>
</reference>
<dbReference type="EC" id="2.7.13.3"/>
<dbReference type="EMBL" id="BA000018">
    <property type="protein sequence ID" value="BAB41438.1"/>
    <property type="molecule type" value="Genomic_DNA"/>
</dbReference>
<dbReference type="PIR" id="C89785">
    <property type="entry name" value="C89785"/>
</dbReference>
<dbReference type="RefSeq" id="WP_000127990.1">
    <property type="nucleotide sequence ID" value="NC_002745.2"/>
</dbReference>
<dbReference type="SMR" id="Q7A7X8"/>
<dbReference type="EnsemblBacteria" id="BAB41438">
    <property type="protein sequence ID" value="BAB41438"/>
    <property type="gene ID" value="BAB41438"/>
</dbReference>
<dbReference type="KEGG" id="sau:SA0216"/>
<dbReference type="HOGENOM" id="CLU_525720_0_0_9"/>
<dbReference type="GO" id="GO:0005886">
    <property type="term" value="C:plasma membrane"/>
    <property type="evidence" value="ECO:0007669"/>
    <property type="project" value="UniProtKB-SubCell"/>
</dbReference>
<dbReference type="GO" id="GO:0005524">
    <property type="term" value="F:ATP binding"/>
    <property type="evidence" value="ECO:0007669"/>
    <property type="project" value="UniProtKB-KW"/>
</dbReference>
<dbReference type="GO" id="GO:0000155">
    <property type="term" value="F:phosphorelay sensor kinase activity"/>
    <property type="evidence" value="ECO:0007669"/>
    <property type="project" value="InterPro"/>
</dbReference>
<dbReference type="Gene3D" id="3.30.565.10">
    <property type="entry name" value="Histidine kinase-like ATPase, C-terminal domain"/>
    <property type="match status" value="1"/>
</dbReference>
<dbReference type="InterPro" id="IPR050640">
    <property type="entry name" value="Bact_2-comp_sensor_kinase"/>
</dbReference>
<dbReference type="InterPro" id="IPR036890">
    <property type="entry name" value="HATPase_C_sf"/>
</dbReference>
<dbReference type="InterPro" id="IPR010559">
    <property type="entry name" value="Sig_transdc_His_kin_internal"/>
</dbReference>
<dbReference type="PANTHER" id="PTHR34220">
    <property type="entry name" value="SENSOR HISTIDINE KINASE YPDA"/>
    <property type="match status" value="1"/>
</dbReference>
<dbReference type="PANTHER" id="PTHR34220:SF11">
    <property type="entry name" value="SENSOR PROTEIN KINASE HPTS"/>
    <property type="match status" value="1"/>
</dbReference>
<dbReference type="Pfam" id="PF02518">
    <property type="entry name" value="HATPase_c"/>
    <property type="match status" value="1"/>
</dbReference>
<dbReference type="Pfam" id="PF06580">
    <property type="entry name" value="His_kinase"/>
    <property type="match status" value="1"/>
</dbReference>
<dbReference type="SUPFAM" id="SSF55874">
    <property type="entry name" value="ATPase domain of HSP90 chaperone/DNA topoisomerase II/histidine kinase"/>
    <property type="match status" value="1"/>
</dbReference>
<feature type="chain" id="PRO_0000299125" description="Sensor protein kinase HptS">
    <location>
        <begin position="1"/>
        <end position="518"/>
    </location>
</feature>
<feature type="transmembrane region" description="Helical" evidence="3">
    <location>
        <begin position="20"/>
        <end position="40"/>
    </location>
</feature>
<feature type="transmembrane region" description="Helical" evidence="3">
    <location>
        <begin position="222"/>
        <end position="242"/>
    </location>
</feature>
<feature type="domain" description="Histidine kinase">
    <location>
        <begin position="297"/>
        <end position="513"/>
    </location>
</feature>
<feature type="modified residue" description="Phosphohistidine; by autocatalysis" evidence="1">
    <location>
        <position position="325"/>
    </location>
</feature>
<evidence type="ECO:0000250" key="1"/>
<evidence type="ECO:0000250" key="2">
    <source>
        <dbReference type="UniProtKB" id="Q2G1E0"/>
    </source>
</evidence>
<evidence type="ECO:0000255" key="3"/>
<evidence type="ECO:0000305" key="4"/>
<proteinExistence type="inferred from homology"/>
<organism>
    <name type="scientific">Staphylococcus aureus (strain N315)</name>
    <dbReference type="NCBI Taxonomy" id="158879"/>
    <lineage>
        <taxon>Bacteria</taxon>
        <taxon>Bacillati</taxon>
        <taxon>Bacillota</taxon>
        <taxon>Bacilli</taxon>
        <taxon>Bacillales</taxon>
        <taxon>Staphylococcaceae</taxon>
        <taxon>Staphylococcus</taxon>
    </lineage>
</organism>
<keyword id="KW-0067">ATP-binding</keyword>
<keyword id="KW-1003">Cell membrane</keyword>
<keyword id="KW-0418">Kinase</keyword>
<keyword id="KW-0472">Membrane</keyword>
<keyword id="KW-0547">Nucleotide-binding</keyword>
<keyword id="KW-0597">Phosphoprotein</keyword>
<keyword id="KW-0808">Transferase</keyword>
<keyword id="KW-0812">Transmembrane</keyword>
<keyword id="KW-1133">Transmembrane helix</keyword>
<keyword id="KW-0902">Two-component regulatory system</keyword>
<protein>
    <recommendedName>
        <fullName>Sensor protein kinase HptS</fullName>
        <ecNumber>2.7.13.3</ecNumber>
    </recommendedName>
</protein>